<comment type="catalytic activity">
    <reaction evidence="1">
        <text>N(2)-acetyl-L-ornithine + 2-oxoglutarate = N-acetyl-L-glutamate 5-semialdehyde + L-glutamate</text>
        <dbReference type="Rhea" id="RHEA:18049"/>
        <dbReference type="ChEBI" id="CHEBI:16810"/>
        <dbReference type="ChEBI" id="CHEBI:29123"/>
        <dbReference type="ChEBI" id="CHEBI:29985"/>
        <dbReference type="ChEBI" id="CHEBI:57805"/>
        <dbReference type="EC" id="2.6.1.11"/>
    </reaction>
</comment>
<comment type="cofactor">
    <cofactor evidence="1">
        <name>pyridoxal 5'-phosphate</name>
        <dbReference type="ChEBI" id="CHEBI:597326"/>
    </cofactor>
    <text evidence="1">Binds 1 pyridoxal phosphate per subunit.</text>
</comment>
<comment type="pathway">
    <text evidence="1">Amino-acid biosynthesis; L-arginine biosynthesis; N(2)-acetyl-L-ornithine from L-glutamate: step 4/4.</text>
</comment>
<comment type="subunit">
    <text evidence="1">Homodimer.</text>
</comment>
<comment type="subcellular location">
    <subcellularLocation>
        <location evidence="1">Cytoplasm</location>
    </subcellularLocation>
</comment>
<comment type="miscellaneous">
    <text evidence="1">May also have succinyldiaminopimelate aminotransferase activity, thus carrying out the corresponding step in lysine biosynthesis.</text>
</comment>
<comment type="similarity">
    <text evidence="1">Belongs to the class-III pyridoxal-phosphate-dependent aminotransferase family. ArgD subfamily.</text>
</comment>
<reference key="1">
    <citation type="journal article" date="2002" name="Proc. Natl. Acad. Sci. U.S.A.">
        <title>The complete genome of hyperthermophile Methanopyrus kandleri AV19 and monophyly of archaeal methanogens.</title>
        <authorList>
            <person name="Slesarev A.I."/>
            <person name="Mezhevaya K.V."/>
            <person name="Makarova K.S."/>
            <person name="Polushin N.N."/>
            <person name="Shcherbinina O.V."/>
            <person name="Shakhova V.V."/>
            <person name="Belova G.I."/>
            <person name="Aravind L."/>
            <person name="Natale D.A."/>
            <person name="Rogozin I.B."/>
            <person name="Tatusov R.L."/>
            <person name="Wolf Y.I."/>
            <person name="Stetter K.O."/>
            <person name="Malykh A.G."/>
            <person name="Koonin E.V."/>
            <person name="Kozyavkin S.A."/>
        </authorList>
    </citation>
    <scope>NUCLEOTIDE SEQUENCE [LARGE SCALE GENOMIC DNA]</scope>
    <source>
        <strain>AV19 / DSM 6324 / JCM 9639 / NBRC 100938</strain>
    </source>
</reference>
<protein>
    <recommendedName>
        <fullName evidence="1">Acetylornithine aminotransferase</fullName>
        <shortName evidence="1">ACOAT</shortName>
        <ecNumber evidence="1">2.6.1.11</ecNumber>
    </recommendedName>
</protein>
<organism>
    <name type="scientific">Methanopyrus kandleri (strain AV19 / DSM 6324 / JCM 9639 / NBRC 100938)</name>
    <dbReference type="NCBI Taxonomy" id="190192"/>
    <lineage>
        <taxon>Archaea</taxon>
        <taxon>Methanobacteriati</taxon>
        <taxon>Methanobacteriota</taxon>
        <taxon>Methanomada group</taxon>
        <taxon>Methanopyri</taxon>
        <taxon>Methanopyrales</taxon>
        <taxon>Methanopyraceae</taxon>
        <taxon>Methanopyrus</taxon>
    </lineage>
</organism>
<proteinExistence type="inferred from homology"/>
<accession>Q8TUZ5</accession>
<dbReference type="EC" id="2.6.1.11" evidence="1"/>
<dbReference type="EMBL" id="AE009439">
    <property type="protein sequence ID" value="AAM02819.1"/>
    <property type="molecule type" value="Genomic_DNA"/>
</dbReference>
<dbReference type="RefSeq" id="WP_011019974.1">
    <property type="nucleotide sequence ID" value="NC_003551.1"/>
</dbReference>
<dbReference type="SMR" id="Q8TUZ5"/>
<dbReference type="FunCoup" id="Q8TUZ5">
    <property type="interactions" value="174"/>
</dbReference>
<dbReference type="STRING" id="190192.MK1606"/>
<dbReference type="PaxDb" id="190192-MK1606"/>
<dbReference type="EnsemblBacteria" id="AAM02819">
    <property type="protein sequence ID" value="AAM02819"/>
    <property type="gene ID" value="MK1606"/>
</dbReference>
<dbReference type="GeneID" id="1478201"/>
<dbReference type="KEGG" id="mka:MK1606"/>
<dbReference type="PATRIC" id="fig|190192.8.peg.1769"/>
<dbReference type="HOGENOM" id="CLU_016922_10_1_2"/>
<dbReference type="InParanoid" id="Q8TUZ5"/>
<dbReference type="OrthoDB" id="85346at2157"/>
<dbReference type="UniPathway" id="UPA00068">
    <property type="reaction ID" value="UER00109"/>
</dbReference>
<dbReference type="Proteomes" id="UP000001826">
    <property type="component" value="Chromosome"/>
</dbReference>
<dbReference type="GO" id="GO:0005737">
    <property type="term" value="C:cytoplasm"/>
    <property type="evidence" value="ECO:0007669"/>
    <property type="project" value="UniProtKB-SubCell"/>
</dbReference>
<dbReference type="GO" id="GO:0042802">
    <property type="term" value="F:identical protein binding"/>
    <property type="evidence" value="ECO:0007669"/>
    <property type="project" value="TreeGrafter"/>
</dbReference>
<dbReference type="GO" id="GO:0003992">
    <property type="term" value="F:N2-acetyl-L-ornithine:2-oxoglutarate 5-aminotransferase activity"/>
    <property type="evidence" value="ECO:0007669"/>
    <property type="project" value="UniProtKB-UniRule"/>
</dbReference>
<dbReference type="GO" id="GO:0030170">
    <property type="term" value="F:pyridoxal phosphate binding"/>
    <property type="evidence" value="ECO:0007669"/>
    <property type="project" value="InterPro"/>
</dbReference>
<dbReference type="GO" id="GO:0006526">
    <property type="term" value="P:L-arginine biosynthetic process"/>
    <property type="evidence" value="ECO:0007669"/>
    <property type="project" value="UniProtKB-UniRule"/>
</dbReference>
<dbReference type="CDD" id="cd00610">
    <property type="entry name" value="OAT_like"/>
    <property type="match status" value="1"/>
</dbReference>
<dbReference type="FunFam" id="3.40.640.10:FF:000004">
    <property type="entry name" value="Acetylornithine aminotransferase"/>
    <property type="match status" value="1"/>
</dbReference>
<dbReference type="Gene3D" id="3.90.1150.10">
    <property type="entry name" value="Aspartate Aminotransferase, domain 1"/>
    <property type="match status" value="1"/>
</dbReference>
<dbReference type="Gene3D" id="3.40.640.10">
    <property type="entry name" value="Type I PLP-dependent aspartate aminotransferase-like (Major domain)"/>
    <property type="match status" value="1"/>
</dbReference>
<dbReference type="HAMAP" id="MF_01107">
    <property type="entry name" value="ArgD_aminotrans_3"/>
    <property type="match status" value="1"/>
</dbReference>
<dbReference type="InterPro" id="IPR004636">
    <property type="entry name" value="AcOrn/SuccOrn_fam"/>
</dbReference>
<dbReference type="InterPro" id="IPR005814">
    <property type="entry name" value="Aminotrans_3"/>
</dbReference>
<dbReference type="InterPro" id="IPR049704">
    <property type="entry name" value="Aminotrans_3_PPA_site"/>
</dbReference>
<dbReference type="InterPro" id="IPR050103">
    <property type="entry name" value="Class-III_PLP-dep_AT"/>
</dbReference>
<dbReference type="InterPro" id="IPR015424">
    <property type="entry name" value="PyrdxlP-dep_Trfase"/>
</dbReference>
<dbReference type="InterPro" id="IPR015421">
    <property type="entry name" value="PyrdxlP-dep_Trfase_major"/>
</dbReference>
<dbReference type="InterPro" id="IPR015422">
    <property type="entry name" value="PyrdxlP-dep_Trfase_small"/>
</dbReference>
<dbReference type="NCBIfam" id="TIGR00707">
    <property type="entry name" value="argD"/>
    <property type="match status" value="1"/>
</dbReference>
<dbReference type="NCBIfam" id="NF002325">
    <property type="entry name" value="PRK01278.1"/>
    <property type="match status" value="1"/>
</dbReference>
<dbReference type="NCBIfam" id="NF002874">
    <property type="entry name" value="PRK03244.1"/>
    <property type="match status" value="1"/>
</dbReference>
<dbReference type="PANTHER" id="PTHR11986:SF79">
    <property type="entry name" value="ACETYLORNITHINE AMINOTRANSFERASE, MITOCHONDRIAL"/>
    <property type="match status" value="1"/>
</dbReference>
<dbReference type="PANTHER" id="PTHR11986">
    <property type="entry name" value="AMINOTRANSFERASE CLASS III"/>
    <property type="match status" value="1"/>
</dbReference>
<dbReference type="Pfam" id="PF00202">
    <property type="entry name" value="Aminotran_3"/>
    <property type="match status" value="1"/>
</dbReference>
<dbReference type="PIRSF" id="PIRSF000521">
    <property type="entry name" value="Transaminase_4ab_Lys_Orn"/>
    <property type="match status" value="1"/>
</dbReference>
<dbReference type="SUPFAM" id="SSF53383">
    <property type="entry name" value="PLP-dependent transferases"/>
    <property type="match status" value="1"/>
</dbReference>
<dbReference type="PROSITE" id="PS00600">
    <property type="entry name" value="AA_TRANSFER_CLASS_3"/>
    <property type="match status" value="1"/>
</dbReference>
<keyword id="KW-0028">Amino-acid biosynthesis</keyword>
<keyword id="KW-0032">Aminotransferase</keyword>
<keyword id="KW-0055">Arginine biosynthesis</keyword>
<keyword id="KW-0963">Cytoplasm</keyword>
<keyword id="KW-0663">Pyridoxal phosphate</keyword>
<keyword id="KW-1185">Reference proteome</keyword>
<keyword id="KW-0808">Transferase</keyword>
<feature type="chain" id="PRO_0000112822" description="Acetylornithine aminotransferase">
    <location>
        <begin position="1"/>
        <end position="389"/>
    </location>
</feature>
<feature type="binding site" evidence="1">
    <location>
        <begin position="104"/>
        <end position="105"/>
    </location>
    <ligand>
        <name>pyridoxal 5'-phosphate</name>
        <dbReference type="ChEBI" id="CHEBI:597326"/>
    </ligand>
</feature>
<feature type="binding site" evidence="1">
    <location>
        <position position="131"/>
    </location>
    <ligand>
        <name>pyridoxal 5'-phosphate</name>
        <dbReference type="ChEBI" id="CHEBI:597326"/>
    </ligand>
</feature>
<feature type="binding site" evidence="1">
    <location>
        <position position="134"/>
    </location>
    <ligand>
        <name>N(2)-acetyl-L-ornithine</name>
        <dbReference type="ChEBI" id="CHEBI:57805"/>
    </ligand>
</feature>
<feature type="binding site" evidence="1">
    <location>
        <begin position="216"/>
        <end position="219"/>
    </location>
    <ligand>
        <name>pyridoxal 5'-phosphate</name>
        <dbReference type="ChEBI" id="CHEBI:597326"/>
    </ligand>
</feature>
<feature type="binding site" evidence="1">
    <location>
        <position position="273"/>
    </location>
    <ligand>
        <name>N(2)-acetyl-L-ornithine</name>
        <dbReference type="ChEBI" id="CHEBI:57805"/>
    </ligand>
</feature>
<feature type="binding site" evidence="1">
    <location>
        <position position="274"/>
    </location>
    <ligand>
        <name>pyridoxal 5'-phosphate</name>
        <dbReference type="ChEBI" id="CHEBI:597326"/>
    </ligand>
</feature>
<feature type="modified residue" description="N6-(pyridoxal phosphate)lysine" evidence="1">
    <location>
        <position position="245"/>
    </location>
</feature>
<name>ARGD_METKA</name>
<gene>
    <name evidence="1" type="primary">argD</name>
    <name type="ordered locus">MK1606</name>
</gene>
<sequence>MDARELIDKYHMNTYSRFPVTLVPGEGARVWDDEGNEYIDLVAGIAVNVLGHCHPAVVEAVKEQVERLIHCSNLYYNEPQAEAARLLAEAAPKDLNKVFFCNSGTESVECAIKLARKFTGCTKFIAFEGGFHGRTMGALSATWKPEFREPFEPLVPEFEHVPYGDVNAVEKAIDDDTAAVIVEPVQGEAGVRIPPEGFLRELRELCDEHGLLLIVDEVQSGMGRTGQFFAFEHEDVLPDIVCLAKGLGGGVPVGATIAREEVAEAFEPGDHGSTFGGNPLACAAVCAAVSTVLEENLPEAAERKGKLAMRILSEAEDVVEEVRGRGLMMGVEVGDDERAKDVAREMLDRGALVNVTSGDVIRLVPPLVIGEDELEKALAELADALRASG</sequence>
<evidence type="ECO:0000255" key="1">
    <source>
        <dbReference type="HAMAP-Rule" id="MF_01107"/>
    </source>
</evidence>